<comment type="similarity">
    <text evidence="3">Belongs to the ABC transporter superfamily. ABCF family. EF3 (TC 3.A.1.121) subfamily.</text>
</comment>
<comment type="sequence caution" evidence="3">
    <conflict type="erroneous gene model prediction">
        <sequence resource="EMBL-CDS" id="BAB09414"/>
    </conflict>
</comment>
<evidence type="ECO:0000255" key="1">
    <source>
        <dbReference type="PROSITE-ProRule" id="PRU00434"/>
    </source>
</evidence>
<evidence type="ECO:0000256" key="2">
    <source>
        <dbReference type="SAM" id="MobiDB-lite"/>
    </source>
</evidence>
<evidence type="ECO:0000305" key="3"/>
<feature type="chain" id="PRO_0000379140" description="ABC transporter F family member 2">
    <location>
        <begin position="1"/>
        <end position="678"/>
    </location>
</feature>
<feature type="domain" description="ABC transporter 1" evidence="1">
    <location>
        <begin position="84"/>
        <end position="342"/>
    </location>
</feature>
<feature type="domain" description="ABC transporter 2" evidence="1">
    <location>
        <begin position="411"/>
        <end position="626"/>
    </location>
</feature>
<feature type="region of interest" description="Disordered" evidence="2">
    <location>
        <begin position="630"/>
        <end position="678"/>
    </location>
</feature>
<feature type="compositionally biased region" description="Basic residues" evidence="2">
    <location>
        <begin position="653"/>
        <end position="678"/>
    </location>
</feature>
<feature type="binding site" evidence="1">
    <location>
        <begin position="116"/>
        <end position="123"/>
    </location>
    <ligand>
        <name>ATP</name>
        <dbReference type="ChEBI" id="CHEBI:30616"/>
    </ligand>
</feature>
<feature type="binding site" evidence="1">
    <location>
        <begin position="443"/>
        <end position="450"/>
    </location>
    <ligand>
        <name>ATP</name>
        <dbReference type="ChEBI" id="CHEBI:30616"/>
    </ligand>
</feature>
<protein>
    <recommendedName>
        <fullName>ABC transporter F family member 2</fullName>
        <shortName>ABC transporter ABCF.2</shortName>
        <shortName>AtABCF2</shortName>
    </recommendedName>
    <alternativeName>
        <fullName>GCN20-type ATP-binding cassette protein GCN2</fullName>
    </alternativeName>
</protein>
<sequence length="678" mass="76491">MVLTTNLYSLNLRSTFFFTNTITCPTLFTFKLSSVSNPRRVFPNIRAHVSAASSNSELESLLSTDRKLISKQSNNGASSISSGVRLENISKSYEGITVLKDVTWEVKKGEKVGLIGVNGAGKTTQLRIITGQEEPDSGNVIWAKPNLKVAFLSQEFEVSMGKTVKEEFMCTFKEEMEIARKLENLQKAIEEAVDDLELMGKLLDEFDLLQRRAQEVDLDSIHAKISKLMSELGFVSEDADRLVASFSSGWQMRMSLGKILLQNPDLLLLDEPTNHLDLDTIEWLEGYLIKQDVPMVIISHDRAFLDQLCTKIVETEMGVSRTFDGNYSQYVISKAELVEAQYAAWEKQQKEIEATKDLISRLSAGANSGRASSAEKKLEKLQEEELIEKPFQRKQMKIRFPECGLSGRSVVTVKNLVFGFDDKMLFNKANLAIERGEKVAIIGPNGCGKSTLLKLIMGLEKPMRGEVILGEHNVLPNYFEQNQAEAQDLDKTVIETVVEAAVDWRIDDIKALLGRCNFKADMLDRKVSLLSGGEKARLAFCKFMVKPSTLLVLDEPTNHLDIPSKEMLEEAINEYKGTVITVSHDRYFIKQIVNRVIEVRDGGLMDYAGDYNYFLEKNVEARARELEREAELEEKAPKVKAKSKMSKAEREARKKQKMKAFQASKKKSKSSKNAKRWN</sequence>
<proteinExistence type="inferred from homology"/>
<gene>
    <name type="primary">ABCF2</name>
    <name type="synonym">GCN2</name>
    <name type="ordered locus">At5g09930</name>
    <name type="ORF">MYH9.14</name>
</gene>
<accession>Q9FIB4</accession>
<dbReference type="EMBL" id="AB016893">
    <property type="protein sequence ID" value="BAB09414.1"/>
    <property type="status" value="ALT_SEQ"/>
    <property type="molecule type" value="Genomic_DNA"/>
</dbReference>
<dbReference type="EMBL" id="CP002688">
    <property type="protein sequence ID" value="AED91468.1"/>
    <property type="molecule type" value="Genomic_DNA"/>
</dbReference>
<dbReference type="RefSeq" id="NP_196555.2">
    <property type="nucleotide sequence ID" value="NM_121030.3"/>
</dbReference>
<dbReference type="SMR" id="Q9FIB4"/>
<dbReference type="FunCoup" id="Q9FIB4">
    <property type="interactions" value="3"/>
</dbReference>
<dbReference type="STRING" id="3702.Q9FIB4"/>
<dbReference type="iPTMnet" id="Q9FIB4"/>
<dbReference type="PaxDb" id="3702-AT5G09930.1"/>
<dbReference type="ProteomicsDB" id="244626"/>
<dbReference type="EnsemblPlants" id="AT5G09930.1">
    <property type="protein sequence ID" value="AT5G09930.1"/>
    <property type="gene ID" value="AT5G09930"/>
</dbReference>
<dbReference type="GeneID" id="830854"/>
<dbReference type="Gramene" id="AT5G09930.1">
    <property type="protein sequence ID" value="AT5G09930.1"/>
    <property type="gene ID" value="AT5G09930"/>
</dbReference>
<dbReference type="KEGG" id="ath:AT5G09930"/>
<dbReference type="Araport" id="AT5G09930"/>
<dbReference type="TAIR" id="AT5G09930">
    <property type="gene designation" value="ABCF2"/>
</dbReference>
<dbReference type="eggNOG" id="KOG0927">
    <property type="taxonomic scope" value="Eukaryota"/>
</dbReference>
<dbReference type="HOGENOM" id="CLU_000604_36_0_1"/>
<dbReference type="InParanoid" id="Q9FIB4"/>
<dbReference type="OMA" id="RFISQEP"/>
<dbReference type="PhylomeDB" id="Q9FIB4"/>
<dbReference type="PRO" id="PR:Q9FIB4"/>
<dbReference type="Proteomes" id="UP000006548">
    <property type="component" value="Chromosome 5"/>
</dbReference>
<dbReference type="ExpressionAtlas" id="Q9FIB4">
    <property type="expression patterns" value="baseline and differential"/>
</dbReference>
<dbReference type="GO" id="GO:0005524">
    <property type="term" value="F:ATP binding"/>
    <property type="evidence" value="ECO:0007669"/>
    <property type="project" value="UniProtKB-KW"/>
</dbReference>
<dbReference type="GO" id="GO:0016887">
    <property type="term" value="F:ATP hydrolysis activity"/>
    <property type="evidence" value="ECO:0007669"/>
    <property type="project" value="InterPro"/>
</dbReference>
<dbReference type="GO" id="GO:0003729">
    <property type="term" value="F:mRNA binding"/>
    <property type="evidence" value="ECO:0000314"/>
    <property type="project" value="TAIR"/>
</dbReference>
<dbReference type="CDD" id="cd03221">
    <property type="entry name" value="ABCF_EF-3"/>
    <property type="match status" value="2"/>
</dbReference>
<dbReference type="FunFam" id="3.40.50.300:FF:000309">
    <property type="entry name" value="ABC transporter ATP-binding protein"/>
    <property type="match status" value="1"/>
</dbReference>
<dbReference type="FunFam" id="3.40.50.300:FF:000011">
    <property type="entry name" value="Putative ABC transporter ATP-binding component"/>
    <property type="match status" value="1"/>
</dbReference>
<dbReference type="Gene3D" id="3.40.50.300">
    <property type="entry name" value="P-loop containing nucleotide triphosphate hydrolases"/>
    <property type="match status" value="2"/>
</dbReference>
<dbReference type="InterPro" id="IPR003593">
    <property type="entry name" value="AAA+_ATPase"/>
</dbReference>
<dbReference type="InterPro" id="IPR032781">
    <property type="entry name" value="ABC_tran_Xtn"/>
</dbReference>
<dbReference type="InterPro" id="IPR003439">
    <property type="entry name" value="ABC_transporter-like_ATP-bd"/>
</dbReference>
<dbReference type="InterPro" id="IPR017871">
    <property type="entry name" value="ABC_transporter-like_CS"/>
</dbReference>
<dbReference type="InterPro" id="IPR051309">
    <property type="entry name" value="ABCF_ATPase"/>
</dbReference>
<dbReference type="InterPro" id="IPR027417">
    <property type="entry name" value="P-loop_NTPase"/>
</dbReference>
<dbReference type="PANTHER" id="PTHR42855">
    <property type="entry name" value="ABC TRANSPORTER ATP-BINDING SUBUNIT"/>
    <property type="match status" value="1"/>
</dbReference>
<dbReference type="PANTHER" id="PTHR42855:SF1">
    <property type="entry name" value="ABC TRANSPORTER DOMAIN-CONTAINING PROTEIN"/>
    <property type="match status" value="1"/>
</dbReference>
<dbReference type="Pfam" id="PF00005">
    <property type="entry name" value="ABC_tran"/>
    <property type="match status" value="2"/>
</dbReference>
<dbReference type="Pfam" id="PF12848">
    <property type="entry name" value="ABC_tran_Xtn"/>
    <property type="match status" value="1"/>
</dbReference>
<dbReference type="SMART" id="SM00382">
    <property type="entry name" value="AAA"/>
    <property type="match status" value="2"/>
</dbReference>
<dbReference type="SUPFAM" id="SSF52540">
    <property type="entry name" value="P-loop containing nucleoside triphosphate hydrolases"/>
    <property type="match status" value="2"/>
</dbReference>
<dbReference type="PROSITE" id="PS00211">
    <property type="entry name" value="ABC_TRANSPORTER_1"/>
    <property type="match status" value="2"/>
</dbReference>
<dbReference type="PROSITE" id="PS50893">
    <property type="entry name" value="ABC_TRANSPORTER_2"/>
    <property type="match status" value="2"/>
</dbReference>
<reference key="1">
    <citation type="journal article" date="1998" name="DNA Res.">
        <title>Structural analysis of Arabidopsis thaliana chromosome 5. VIII. Sequence features of the regions of 1,081,958 bp covered by seventeen physically assigned P1 and TAC clones.</title>
        <authorList>
            <person name="Asamizu E."/>
            <person name="Sato S."/>
            <person name="Kaneko T."/>
            <person name="Nakamura Y."/>
            <person name="Kotani H."/>
            <person name="Miyajima N."/>
            <person name="Tabata S."/>
        </authorList>
    </citation>
    <scope>NUCLEOTIDE SEQUENCE [LARGE SCALE GENOMIC DNA]</scope>
    <source>
        <strain>cv. Columbia</strain>
    </source>
</reference>
<reference key="2">
    <citation type="journal article" date="2017" name="Plant J.">
        <title>Araport11: a complete reannotation of the Arabidopsis thaliana reference genome.</title>
        <authorList>
            <person name="Cheng C.Y."/>
            <person name="Krishnakumar V."/>
            <person name="Chan A.P."/>
            <person name="Thibaud-Nissen F."/>
            <person name="Schobel S."/>
            <person name="Town C.D."/>
        </authorList>
    </citation>
    <scope>GENOME REANNOTATION</scope>
    <source>
        <strain>cv. Columbia</strain>
    </source>
</reference>
<reference key="3">
    <citation type="journal article" date="2001" name="J. Biol. Chem.">
        <title>The Arabidopsis thaliana ABC protein superfamily, a complete inventory.</title>
        <authorList>
            <person name="Sanchez-Fernandez R."/>
            <person name="Davies T.G."/>
            <person name="Coleman J.O."/>
            <person name="Rea P.A."/>
        </authorList>
    </citation>
    <scope>GENE FAMILY</scope>
    <scope>NOMENCLATURE</scope>
</reference>
<reference key="4">
    <citation type="journal article" date="2002" name="Planta">
        <title>Multifunctionality of plant ABC transporters -- more than just detoxifiers.</title>
        <authorList>
            <person name="Martinoia E."/>
            <person name="Klein M."/>
            <person name="Geisler M."/>
            <person name="Bovet L."/>
            <person name="Forestier C."/>
            <person name="Kolukisaoglu H.U."/>
            <person name="Mueller-Roeber B."/>
            <person name="Schulz B."/>
        </authorList>
    </citation>
    <scope>GENE FAMILY</scope>
</reference>
<reference key="5">
    <citation type="journal article" date="2008" name="Trends Plant Sci.">
        <title>Plant ABC proteins - a unified nomenclature and updated inventory.</title>
        <authorList>
            <person name="Verrier P.J."/>
            <person name="Bird D."/>
            <person name="Burla B."/>
            <person name="Dassa E."/>
            <person name="Forestier C."/>
            <person name="Geisler M."/>
            <person name="Klein M."/>
            <person name="Kolukisaoglu H.U."/>
            <person name="Lee Y."/>
            <person name="Martinoia E."/>
            <person name="Murphy A."/>
            <person name="Rea P.A."/>
            <person name="Samuels L."/>
            <person name="Schulz B."/>
            <person name="Spalding E.J."/>
            <person name="Yazaki K."/>
            <person name="Theodoulou F.L."/>
        </authorList>
    </citation>
    <scope>GENE FAMILY</scope>
    <scope>NOMENCLATURE</scope>
</reference>
<name>AB2F_ARATH</name>
<organism>
    <name type="scientific">Arabidopsis thaliana</name>
    <name type="common">Mouse-ear cress</name>
    <dbReference type="NCBI Taxonomy" id="3702"/>
    <lineage>
        <taxon>Eukaryota</taxon>
        <taxon>Viridiplantae</taxon>
        <taxon>Streptophyta</taxon>
        <taxon>Embryophyta</taxon>
        <taxon>Tracheophyta</taxon>
        <taxon>Spermatophyta</taxon>
        <taxon>Magnoliopsida</taxon>
        <taxon>eudicotyledons</taxon>
        <taxon>Gunneridae</taxon>
        <taxon>Pentapetalae</taxon>
        <taxon>rosids</taxon>
        <taxon>malvids</taxon>
        <taxon>Brassicales</taxon>
        <taxon>Brassicaceae</taxon>
        <taxon>Camelineae</taxon>
        <taxon>Arabidopsis</taxon>
    </lineage>
</organism>
<keyword id="KW-0067">ATP-binding</keyword>
<keyword id="KW-0547">Nucleotide-binding</keyword>
<keyword id="KW-1185">Reference proteome</keyword>
<keyword id="KW-0677">Repeat</keyword>
<keyword id="KW-0813">Transport</keyword>